<gene>
    <name type="primary">YME2</name>
    <name type="ORF">CIMG_02483</name>
</gene>
<reference key="1">
    <citation type="journal article" date="2009" name="Genome Res.">
        <title>Comparative genomic analyses of the human fungal pathogens Coccidioides and their relatives.</title>
        <authorList>
            <person name="Sharpton T.J."/>
            <person name="Stajich J.E."/>
            <person name="Rounsley S.D."/>
            <person name="Gardner M.J."/>
            <person name="Wortman J.R."/>
            <person name="Jordar V.S."/>
            <person name="Maiti R."/>
            <person name="Kodira C.D."/>
            <person name="Neafsey D.E."/>
            <person name="Zeng Q."/>
            <person name="Hung C.-Y."/>
            <person name="McMahan C."/>
            <person name="Muszewska A."/>
            <person name="Grynberg M."/>
            <person name="Mandel M.A."/>
            <person name="Kellner E.M."/>
            <person name="Barker B.M."/>
            <person name="Galgiani J.N."/>
            <person name="Orbach M.J."/>
            <person name="Kirkland T.N."/>
            <person name="Cole G.T."/>
            <person name="Henn M.R."/>
            <person name="Birren B.W."/>
            <person name="Taylor J.W."/>
        </authorList>
    </citation>
    <scope>NUCLEOTIDE SEQUENCE [LARGE SCALE GENOMIC DNA]</scope>
    <source>
        <strain>RS</strain>
    </source>
</reference>
<reference key="2">
    <citation type="journal article" date="2010" name="Genome Res.">
        <title>Population genomic sequencing of Coccidioides fungi reveals recent hybridization and transposon control.</title>
        <authorList>
            <person name="Neafsey D.E."/>
            <person name="Barker B.M."/>
            <person name="Sharpton T.J."/>
            <person name="Stajich J.E."/>
            <person name="Park D.J."/>
            <person name="Whiston E."/>
            <person name="Hung C.-Y."/>
            <person name="McMahan C."/>
            <person name="White J."/>
            <person name="Sykes S."/>
            <person name="Heiman D."/>
            <person name="Young S."/>
            <person name="Zeng Q."/>
            <person name="Abouelleil A."/>
            <person name="Aftuck L."/>
            <person name="Bessette D."/>
            <person name="Brown A."/>
            <person name="FitzGerald M."/>
            <person name="Lui A."/>
            <person name="Macdonald J.P."/>
            <person name="Priest M."/>
            <person name="Orbach M.J."/>
            <person name="Galgiani J.N."/>
            <person name="Kirkland T.N."/>
            <person name="Cole G.T."/>
            <person name="Birren B.W."/>
            <person name="Henn M.R."/>
            <person name="Taylor J.W."/>
            <person name="Rounsley S.D."/>
        </authorList>
    </citation>
    <scope>GENOME REANNOTATION</scope>
    <source>
        <strain>RS</strain>
    </source>
</reference>
<sequence length="839" mass="93614">MIQFSGRACLRQGWKCAAGVGLRCHGAHSSPPLHVPPFRRYTATYSRADETGHIDTAPNESVFYFDSVLPVKALFSRRFAPLDLAPSMTGRIGNLIIKLTGATPLNVIGRAFPLELQENIQQVIPRYSEGGAFVKLSHPPNMDKEGLSSLLNTHLEQNPLKLWFSPFTSVRASLVRGRPWLEDLQRSPSSRIKVEFLPTSPGASSVELTPELLYSLSRRYGKLADIIPQPSDSKIQPRYALLDFTRPSYAVIAKNCLHGYKVSASEGGGSAGTLLKLSYERKLKPHVIRGWIVSHPRIVIPIIAAVIAAITVIVFDPIRTFFIKIQIAPPIDVQDNRLWQWIQRQASKANDILSLRQRQRSDSRGLKAIWEDRKEDIQRLQTWLLEATNTFTVVHGPRGSGKKELVLDEVLKGYRHKLVIDCKPIQEARGDSATINAAAAEVGYRPVFSWMNSISSLIDVATQTLGANAGLSETLDSQLGHILQNTANALKKVALEKKRWDGKDSHMTDEEFLEAHPECRPVVVIDNFLYKANNNPMIYEKLSDWAAALTVSNIARVIFLTGDISYSKTLSRALPNQIFHEIQLGDCTPDVAKQFVLDHLHTDQSNSSSYTQAGPDTIEGGDIKDLEDCIEVLGGRLSDLEFFARMISRGQSPSDAVHDIIVQSAAEILKMYIADVDNTVRNWTPEQAWYLVSSLAEAQGGSILYSEALFSDLFKKDGESTIRALEQAELISVTTLNDRPSTIKPGRPVFAAAFRRLLEDDVLRCRLGLRTLGQQIAMENANINKYEGELQVLGSLEKEPKEIRPRVRWLLEKLAGSQAKIEKYEKESVGLRRILQSKM</sequence>
<proteinExistence type="inferred from homology"/>
<evidence type="ECO:0000250" key="1"/>
<evidence type="ECO:0000255" key="2"/>
<evidence type="ECO:0000305" key="3"/>
<protein>
    <recommendedName>
        <fullName>Mitochondrial escape protein 2</fullName>
    </recommendedName>
</protein>
<accession>Q1E4N0</accession>
<accession>J3KLV8</accession>
<comment type="function">
    <text evidence="1">Plays a role in maintaining the mitochondrial genome and in controlling the mtDNA escape. Involved in the regulation of mtDNA nucleotide structure and number. May have a dispensable role in early maturation of pre-rRNA (By similarity).</text>
</comment>
<comment type="subcellular location">
    <subcellularLocation>
        <location evidence="1">Mitochondrion inner membrane</location>
        <topology evidence="1">Single-pass membrane protein</topology>
    </subcellularLocation>
</comment>
<comment type="similarity">
    <text evidence="3">Belongs to the YME2 family.</text>
</comment>
<feature type="transit peptide" description="Mitochondrion" evidence="2">
    <location>
        <begin position="1"/>
        <end position="42"/>
    </location>
</feature>
<feature type="chain" id="PRO_0000343120" description="Mitochondrial escape protein 2">
    <location>
        <begin position="43"/>
        <end position="839"/>
    </location>
</feature>
<feature type="topological domain" description="Mitochondrial matrix" evidence="2">
    <location>
        <begin position="43"/>
        <end position="297"/>
    </location>
</feature>
<feature type="transmembrane region" description="Helical" evidence="2">
    <location>
        <begin position="298"/>
        <end position="318"/>
    </location>
</feature>
<feature type="topological domain" description="Mitochondrial intermembrane" evidence="2">
    <location>
        <begin position="319"/>
        <end position="839"/>
    </location>
</feature>
<feature type="domain" description="RRM">
    <location>
        <begin position="190"/>
        <end position="282"/>
    </location>
</feature>
<feature type="coiled-coil region" evidence="2">
    <location>
        <begin position="769"/>
        <end position="838"/>
    </location>
</feature>
<dbReference type="EMBL" id="GG704911">
    <property type="protein sequence ID" value="EAS37129.3"/>
    <property type="molecule type" value="Genomic_DNA"/>
</dbReference>
<dbReference type="RefSeq" id="XP_001248712.1">
    <property type="nucleotide sequence ID" value="XM_001248711.2"/>
</dbReference>
<dbReference type="FunCoup" id="Q1E4N0">
    <property type="interactions" value="132"/>
</dbReference>
<dbReference type="STRING" id="246410.Q1E4N0"/>
<dbReference type="GeneID" id="4567783"/>
<dbReference type="KEGG" id="cim:CIMG_02483"/>
<dbReference type="VEuPathDB" id="FungiDB:CIMG_02483"/>
<dbReference type="InParanoid" id="Q1E4N0"/>
<dbReference type="OMA" id="WTPEQAW"/>
<dbReference type="OrthoDB" id="10267654at2759"/>
<dbReference type="Proteomes" id="UP000001261">
    <property type="component" value="Unassembled WGS sequence"/>
</dbReference>
<dbReference type="GO" id="GO:0005743">
    <property type="term" value="C:mitochondrial inner membrane"/>
    <property type="evidence" value="ECO:0007669"/>
    <property type="project" value="UniProtKB-SubCell"/>
</dbReference>
<dbReference type="GO" id="GO:0003723">
    <property type="term" value="F:RNA binding"/>
    <property type="evidence" value="ECO:0007669"/>
    <property type="project" value="UniProtKB-KW"/>
</dbReference>
<dbReference type="GO" id="GO:0000002">
    <property type="term" value="P:mitochondrial genome maintenance"/>
    <property type="evidence" value="ECO:0007669"/>
    <property type="project" value="InterPro"/>
</dbReference>
<dbReference type="GO" id="GO:0006397">
    <property type="term" value="P:mRNA processing"/>
    <property type="evidence" value="ECO:0007669"/>
    <property type="project" value="UniProtKB-KW"/>
</dbReference>
<dbReference type="CDD" id="cd12433">
    <property type="entry name" value="RRM_Yme2p_like"/>
    <property type="match status" value="1"/>
</dbReference>
<dbReference type="InterPro" id="IPR018850">
    <property type="entry name" value="Mt_escape_2_C"/>
</dbReference>
<dbReference type="InterPro" id="IPR039627">
    <property type="entry name" value="Yme2_C"/>
</dbReference>
<dbReference type="InterPro" id="IPR034260">
    <property type="entry name" value="Yme2_RRM"/>
</dbReference>
<dbReference type="PANTHER" id="PTHR32198">
    <property type="entry name" value="MITOCHONDRIAL ESCAPE PROTEIN 2"/>
    <property type="match status" value="1"/>
</dbReference>
<dbReference type="PANTHER" id="PTHR32198:SF2">
    <property type="entry name" value="MITOCHONDRIAL ESCAPE PROTEIN 2"/>
    <property type="match status" value="1"/>
</dbReference>
<dbReference type="Pfam" id="PF10443">
    <property type="entry name" value="RNA12"/>
    <property type="match status" value="1"/>
</dbReference>
<keyword id="KW-0175">Coiled coil</keyword>
<keyword id="KW-0472">Membrane</keyword>
<keyword id="KW-0496">Mitochondrion</keyword>
<keyword id="KW-0999">Mitochondrion inner membrane</keyword>
<keyword id="KW-0507">mRNA processing</keyword>
<keyword id="KW-1185">Reference proteome</keyword>
<keyword id="KW-0694">RNA-binding</keyword>
<keyword id="KW-0809">Transit peptide</keyword>
<keyword id="KW-0812">Transmembrane</keyword>
<keyword id="KW-1133">Transmembrane helix</keyword>
<name>YME2_COCIM</name>
<organism>
    <name type="scientific">Coccidioides immitis (strain RS)</name>
    <name type="common">Valley fever fungus</name>
    <dbReference type="NCBI Taxonomy" id="246410"/>
    <lineage>
        <taxon>Eukaryota</taxon>
        <taxon>Fungi</taxon>
        <taxon>Dikarya</taxon>
        <taxon>Ascomycota</taxon>
        <taxon>Pezizomycotina</taxon>
        <taxon>Eurotiomycetes</taxon>
        <taxon>Eurotiomycetidae</taxon>
        <taxon>Onygenales</taxon>
        <taxon>Onygenaceae</taxon>
        <taxon>Coccidioides</taxon>
    </lineage>
</organism>